<comment type="function">
    <text evidence="2">Part of the elfADCG-ycbUVF fimbrial operon, which promotes adhesion of bacteria to different abiotic surfaces.</text>
</comment>
<comment type="induction">
    <text evidence="2">Expression is negatively regulated by H-NS and subjected to cAMP receptor protein (CRP)-mediated catabolite repression.</text>
</comment>
<comment type="miscellaneous">
    <text evidence="3">The operon is cryptic under classical laboratory conditions, but is functional when constitutively expressed.</text>
</comment>
<sequence>MKKKTIFQCVILFFSILNIHVGMAGPEQVSMHIYGNVVDQGCDVATKSALQNIHIGDFNISDFQAANTVSTAADLNIDITGCAAGITGADVLFSGEADTLAPTLLKLTDTGGSGGMATGIAVQILDAQSQQEIPLNQVQPLTPLKAGDNTLKYQLRYKSTKAGATGGNATAVLYFDLVYQ</sequence>
<accession>P75859</accession>
<feature type="signal peptide" evidence="1">
    <location>
        <begin position="1"/>
        <end position="24"/>
    </location>
</feature>
<feature type="chain" id="PRO_0000013765" description="Uncharacterized fimbrial-like protein YcbU">
    <location>
        <begin position="25"/>
        <end position="180"/>
    </location>
</feature>
<protein>
    <recommendedName>
        <fullName>Uncharacterized fimbrial-like protein YcbU</fullName>
    </recommendedName>
</protein>
<evidence type="ECO:0000255" key="1"/>
<evidence type="ECO:0000269" key="2">
    <source>
    </source>
</evidence>
<evidence type="ECO:0000305" key="3">
    <source>
    </source>
</evidence>
<keyword id="KW-1185">Reference proteome</keyword>
<keyword id="KW-0732">Signal</keyword>
<name>YCBU_ECOLI</name>
<organism>
    <name type="scientific">Escherichia coli (strain K12)</name>
    <dbReference type="NCBI Taxonomy" id="83333"/>
    <lineage>
        <taxon>Bacteria</taxon>
        <taxon>Pseudomonadati</taxon>
        <taxon>Pseudomonadota</taxon>
        <taxon>Gammaproteobacteria</taxon>
        <taxon>Enterobacterales</taxon>
        <taxon>Enterobacteriaceae</taxon>
        <taxon>Escherichia</taxon>
    </lineage>
</organism>
<dbReference type="EMBL" id="U00096">
    <property type="protein sequence ID" value="AAC74028.1"/>
    <property type="molecule type" value="Genomic_DNA"/>
</dbReference>
<dbReference type="EMBL" id="AP009048">
    <property type="protein sequence ID" value="BAA35697.1"/>
    <property type="molecule type" value="Genomic_DNA"/>
</dbReference>
<dbReference type="PIR" id="E64834">
    <property type="entry name" value="E64834"/>
</dbReference>
<dbReference type="RefSeq" id="NP_415462.1">
    <property type="nucleotide sequence ID" value="NC_000913.3"/>
</dbReference>
<dbReference type="RefSeq" id="WP_000730614.1">
    <property type="nucleotide sequence ID" value="NZ_STEB01000006.1"/>
</dbReference>
<dbReference type="SMR" id="P75859"/>
<dbReference type="BioGRID" id="4259441">
    <property type="interactions" value="14"/>
</dbReference>
<dbReference type="FunCoup" id="P75859">
    <property type="interactions" value="255"/>
</dbReference>
<dbReference type="STRING" id="511145.b0942"/>
<dbReference type="PaxDb" id="511145-b0942"/>
<dbReference type="EnsemblBacteria" id="AAC74028">
    <property type="protein sequence ID" value="AAC74028"/>
    <property type="gene ID" value="b0942"/>
</dbReference>
<dbReference type="GeneID" id="945561"/>
<dbReference type="KEGG" id="ecj:JW0925"/>
<dbReference type="KEGG" id="eco:b0942"/>
<dbReference type="PATRIC" id="fig|1411691.4.peg.1332"/>
<dbReference type="EchoBASE" id="EB3477"/>
<dbReference type="eggNOG" id="COG3539">
    <property type="taxonomic scope" value="Bacteria"/>
</dbReference>
<dbReference type="HOGENOM" id="CLU_088965_0_1_6"/>
<dbReference type="InParanoid" id="P75859"/>
<dbReference type="OMA" id="KDQPVNM"/>
<dbReference type="OrthoDB" id="6572692at2"/>
<dbReference type="PhylomeDB" id="P75859"/>
<dbReference type="BioCyc" id="EcoCyc:G6484-MONOMER"/>
<dbReference type="PRO" id="PR:P75859"/>
<dbReference type="Proteomes" id="UP000000625">
    <property type="component" value="Chromosome"/>
</dbReference>
<dbReference type="GO" id="GO:0009289">
    <property type="term" value="C:pilus"/>
    <property type="evidence" value="ECO:0000318"/>
    <property type="project" value="GO_Central"/>
</dbReference>
<dbReference type="GO" id="GO:0043709">
    <property type="term" value="P:cell adhesion involved in single-species biofilm formation"/>
    <property type="evidence" value="ECO:0000315"/>
    <property type="project" value="EcoCyc"/>
</dbReference>
<dbReference type="FunFam" id="2.60.40.1090:FF:000003">
    <property type="entry name" value="Fimbrial subunit"/>
    <property type="match status" value="1"/>
</dbReference>
<dbReference type="Gene3D" id="2.60.40.1090">
    <property type="entry name" value="Fimbrial-type adhesion domain"/>
    <property type="match status" value="1"/>
</dbReference>
<dbReference type="InterPro" id="IPR000259">
    <property type="entry name" value="Adhesion_dom_fimbrial"/>
</dbReference>
<dbReference type="InterPro" id="IPR036937">
    <property type="entry name" value="Adhesion_dom_fimbrial_sf"/>
</dbReference>
<dbReference type="InterPro" id="IPR008966">
    <property type="entry name" value="Adhesion_dom_sf"/>
</dbReference>
<dbReference type="InterPro" id="IPR050263">
    <property type="entry name" value="Bact_Fimbrial_Adh_Pro"/>
</dbReference>
<dbReference type="PANTHER" id="PTHR33420:SF5">
    <property type="entry name" value="FIMBRIAL SUBUNIT"/>
    <property type="match status" value="1"/>
</dbReference>
<dbReference type="PANTHER" id="PTHR33420">
    <property type="entry name" value="FIMBRIAL SUBUNIT ELFA-RELATED"/>
    <property type="match status" value="1"/>
</dbReference>
<dbReference type="Pfam" id="PF00419">
    <property type="entry name" value="Fimbrial"/>
    <property type="match status" value="1"/>
</dbReference>
<dbReference type="SUPFAM" id="SSF49401">
    <property type="entry name" value="Bacterial adhesins"/>
    <property type="match status" value="1"/>
</dbReference>
<gene>
    <name type="primary">ycbU</name>
    <name type="ordered locus">b0942</name>
    <name type="ordered locus">JW0925</name>
</gene>
<proteinExistence type="evidence at transcript level"/>
<reference key="1">
    <citation type="journal article" date="1996" name="DNA Res.">
        <title>A 718-kb DNA sequence of the Escherichia coli K-12 genome corresponding to the 12.7-28.0 min region on the linkage map.</title>
        <authorList>
            <person name="Oshima T."/>
            <person name="Aiba H."/>
            <person name="Baba T."/>
            <person name="Fujita K."/>
            <person name="Hayashi K."/>
            <person name="Honjo A."/>
            <person name="Ikemoto K."/>
            <person name="Inada T."/>
            <person name="Itoh T."/>
            <person name="Kajihara M."/>
            <person name="Kanai K."/>
            <person name="Kashimoto K."/>
            <person name="Kimura S."/>
            <person name="Kitagawa M."/>
            <person name="Makino K."/>
            <person name="Masuda S."/>
            <person name="Miki T."/>
            <person name="Mizobuchi K."/>
            <person name="Mori H."/>
            <person name="Motomura K."/>
            <person name="Nakamura Y."/>
            <person name="Nashimoto H."/>
            <person name="Nishio Y."/>
            <person name="Saito N."/>
            <person name="Sampei G."/>
            <person name="Seki Y."/>
            <person name="Tagami H."/>
            <person name="Takemoto K."/>
            <person name="Wada C."/>
            <person name="Yamamoto Y."/>
            <person name="Yano M."/>
            <person name="Horiuchi T."/>
        </authorList>
    </citation>
    <scope>NUCLEOTIDE SEQUENCE [LARGE SCALE GENOMIC DNA]</scope>
    <source>
        <strain>K12 / W3110 / ATCC 27325 / DSM 5911</strain>
    </source>
</reference>
<reference key="2">
    <citation type="journal article" date="1997" name="Science">
        <title>The complete genome sequence of Escherichia coli K-12.</title>
        <authorList>
            <person name="Blattner F.R."/>
            <person name="Plunkett G. III"/>
            <person name="Bloch C.A."/>
            <person name="Perna N.T."/>
            <person name="Burland V."/>
            <person name="Riley M."/>
            <person name="Collado-Vides J."/>
            <person name="Glasner J.D."/>
            <person name="Rode C.K."/>
            <person name="Mayhew G.F."/>
            <person name="Gregor J."/>
            <person name="Davis N.W."/>
            <person name="Kirkpatrick H.A."/>
            <person name="Goeden M.A."/>
            <person name="Rose D.J."/>
            <person name="Mau B."/>
            <person name="Shao Y."/>
        </authorList>
    </citation>
    <scope>NUCLEOTIDE SEQUENCE [LARGE SCALE GENOMIC DNA]</scope>
    <source>
        <strain>K12 / MG1655 / ATCC 47076</strain>
    </source>
</reference>
<reference key="3">
    <citation type="journal article" date="2006" name="Mol. Syst. Biol.">
        <title>Highly accurate genome sequences of Escherichia coli K-12 strains MG1655 and W3110.</title>
        <authorList>
            <person name="Hayashi K."/>
            <person name="Morooka N."/>
            <person name="Yamamoto Y."/>
            <person name="Fujita K."/>
            <person name="Isono K."/>
            <person name="Choi S."/>
            <person name="Ohtsubo E."/>
            <person name="Baba T."/>
            <person name="Wanner B.L."/>
            <person name="Mori H."/>
            <person name="Horiuchi T."/>
        </authorList>
    </citation>
    <scope>NUCLEOTIDE SEQUENCE [LARGE SCALE GENOMIC DNA]</scope>
    <source>
        <strain>K12 / W3110 / ATCC 27325 / DSM 5911</strain>
    </source>
</reference>
<reference key="4">
    <citation type="journal article" date="2010" name="Environ. Microbiol.">
        <title>Escherichia coli K-12 possesses multiple cryptic but functional chaperone-usher fimbriae with distinct surface specificities.</title>
        <authorList>
            <person name="Korea C.G."/>
            <person name="Badouraly R."/>
            <person name="Prevost M.C."/>
            <person name="Ghigo J.M."/>
            <person name="Beloin C."/>
        </authorList>
    </citation>
    <scope>FUNCTION</scope>
    <scope>INDUCTION</scope>
    <source>
        <strain>K12 / MG1655 / ATCC 47076</strain>
    </source>
</reference>